<dbReference type="EC" id="2.3.1.89" evidence="1"/>
<dbReference type="EMBL" id="BA000033">
    <property type="protein sequence ID" value="BAB95150.1"/>
    <property type="molecule type" value="Genomic_DNA"/>
</dbReference>
<dbReference type="SMR" id="Q7A0X6"/>
<dbReference type="KEGG" id="sam:MW1285"/>
<dbReference type="HOGENOM" id="CLU_103751_0_0_9"/>
<dbReference type="UniPathway" id="UPA00034">
    <property type="reaction ID" value="UER00022"/>
</dbReference>
<dbReference type="GO" id="GO:0047200">
    <property type="term" value="F:tetrahydrodipicolinate N-acetyltransferase activity"/>
    <property type="evidence" value="ECO:0007669"/>
    <property type="project" value="UniProtKB-EC"/>
</dbReference>
<dbReference type="GO" id="GO:0019877">
    <property type="term" value="P:diaminopimelate biosynthetic process"/>
    <property type="evidence" value="ECO:0007669"/>
    <property type="project" value="UniProtKB-UniRule"/>
</dbReference>
<dbReference type="GO" id="GO:0009089">
    <property type="term" value="P:lysine biosynthetic process via diaminopimelate"/>
    <property type="evidence" value="ECO:0007669"/>
    <property type="project" value="UniProtKB-UniRule"/>
</dbReference>
<dbReference type="CDD" id="cd03350">
    <property type="entry name" value="LbH_THP_succinylT"/>
    <property type="match status" value="1"/>
</dbReference>
<dbReference type="Gene3D" id="2.160.10.10">
    <property type="entry name" value="Hexapeptide repeat proteins"/>
    <property type="match status" value="1"/>
</dbReference>
<dbReference type="Gene3D" id="3.30.70.250">
    <property type="entry name" value="Malonyl-CoA ACP transacylase, ACP-binding"/>
    <property type="match status" value="1"/>
</dbReference>
<dbReference type="HAMAP" id="MF_01691">
    <property type="entry name" value="DapH"/>
    <property type="match status" value="1"/>
</dbReference>
<dbReference type="InterPro" id="IPR019873">
    <property type="entry name" value="DapH"/>
</dbReference>
<dbReference type="InterPro" id="IPR013710">
    <property type="entry name" value="DapH_N"/>
</dbReference>
<dbReference type="InterPro" id="IPR001451">
    <property type="entry name" value="Hexapep"/>
</dbReference>
<dbReference type="InterPro" id="IPR018357">
    <property type="entry name" value="Hexapep_transf_CS"/>
</dbReference>
<dbReference type="InterPro" id="IPR050179">
    <property type="entry name" value="Trans_hexapeptide_repeat"/>
</dbReference>
<dbReference type="InterPro" id="IPR011004">
    <property type="entry name" value="Trimer_LpxA-like_sf"/>
</dbReference>
<dbReference type="NCBIfam" id="TIGR03532">
    <property type="entry name" value="DapD_Ac"/>
    <property type="match status" value="1"/>
</dbReference>
<dbReference type="PANTHER" id="PTHR43300:SF10">
    <property type="entry name" value="2,3,4,5-TETRAHYDROPYRIDINE-2,6-DICARBOXYLATE N-ACETYLTRANSFERASE"/>
    <property type="match status" value="1"/>
</dbReference>
<dbReference type="PANTHER" id="PTHR43300">
    <property type="entry name" value="ACETYLTRANSFERASE"/>
    <property type="match status" value="1"/>
</dbReference>
<dbReference type="Pfam" id="PF08503">
    <property type="entry name" value="DapH_N"/>
    <property type="match status" value="1"/>
</dbReference>
<dbReference type="Pfam" id="PF00132">
    <property type="entry name" value="Hexapep"/>
    <property type="match status" value="1"/>
</dbReference>
<dbReference type="Pfam" id="PF14602">
    <property type="entry name" value="Hexapep_2"/>
    <property type="match status" value="1"/>
</dbReference>
<dbReference type="SUPFAM" id="SSF51161">
    <property type="entry name" value="Trimeric LpxA-like enzymes"/>
    <property type="match status" value="1"/>
</dbReference>
<dbReference type="PROSITE" id="PS00101">
    <property type="entry name" value="HEXAPEP_TRANSFERASES"/>
    <property type="match status" value="1"/>
</dbReference>
<feature type="chain" id="PRO_0000376695" description="2,3,4,5-tetrahydropyridine-2,6-dicarboxylate N-acetyltransferase">
    <location>
        <begin position="1"/>
        <end position="239"/>
    </location>
</feature>
<sequence length="239" mass="25258">MVQHLTAEEIIQYISDAKKSTPIKVYLNGNFEGITYPESFKVFGSEQSKVIFCEADDWKPFYEAYGSQFEDIEIEMDRRNSAIPLKDLTNTNARIEPGAFIREQAIIEDGAVVMMGATINIGAVVGEGTMIDMNATLGGRATTGKNVHVGAGAVLAGVIEPPSASPVIIEDDVLIGANAVILEGVRVGKGAIVAAGAIVTQDVPAGAVVAGTPAKVIKQASEVQDTKKEIVAALRKLND</sequence>
<accession>Q7A0X6</accession>
<name>DAPH_STAAW</name>
<organism>
    <name type="scientific">Staphylococcus aureus (strain MW2)</name>
    <dbReference type="NCBI Taxonomy" id="196620"/>
    <lineage>
        <taxon>Bacteria</taxon>
        <taxon>Bacillati</taxon>
        <taxon>Bacillota</taxon>
        <taxon>Bacilli</taxon>
        <taxon>Bacillales</taxon>
        <taxon>Staphylococcaceae</taxon>
        <taxon>Staphylococcus</taxon>
    </lineage>
</organism>
<proteinExistence type="inferred from homology"/>
<evidence type="ECO:0000255" key="1">
    <source>
        <dbReference type="HAMAP-Rule" id="MF_01691"/>
    </source>
</evidence>
<gene>
    <name evidence="1" type="primary">dapH</name>
    <name type="ordered locus">MW1285</name>
</gene>
<keyword id="KW-0012">Acyltransferase</keyword>
<keyword id="KW-0028">Amino-acid biosynthesis</keyword>
<keyword id="KW-0220">Diaminopimelate biosynthesis</keyword>
<keyword id="KW-0457">Lysine biosynthesis</keyword>
<keyword id="KW-0677">Repeat</keyword>
<keyword id="KW-0808">Transferase</keyword>
<protein>
    <recommendedName>
        <fullName evidence="1">2,3,4,5-tetrahydropyridine-2,6-dicarboxylate N-acetyltransferase</fullName>
        <ecNumber evidence="1">2.3.1.89</ecNumber>
    </recommendedName>
    <alternativeName>
        <fullName evidence="1">Tetrahydrodipicolinate N-acetyltransferase</fullName>
        <shortName evidence="1">THP acetyltransferase</shortName>
        <shortName evidence="1">Tetrahydropicolinate acetylase</shortName>
    </alternativeName>
</protein>
<reference key="1">
    <citation type="journal article" date="2002" name="Lancet">
        <title>Genome and virulence determinants of high virulence community-acquired MRSA.</title>
        <authorList>
            <person name="Baba T."/>
            <person name="Takeuchi F."/>
            <person name="Kuroda M."/>
            <person name="Yuzawa H."/>
            <person name="Aoki K."/>
            <person name="Oguchi A."/>
            <person name="Nagai Y."/>
            <person name="Iwama N."/>
            <person name="Asano K."/>
            <person name="Naimi T."/>
            <person name="Kuroda H."/>
            <person name="Cui L."/>
            <person name="Yamamoto K."/>
            <person name="Hiramatsu K."/>
        </authorList>
    </citation>
    <scope>NUCLEOTIDE SEQUENCE [LARGE SCALE GENOMIC DNA]</scope>
    <source>
        <strain>MW2</strain>
    </source>
</reference>
<comment type="function">
    <text evidence="1">Catalyzes the transfer of an acetyl group from acetyl-CoA to tetrahydrodipicolinate.</text>
</comment>
<comment type="catalytic activity">
    <reaction evidence="1">
        <text>(S)-2,3,4,5-tetrahydrodipicolinate + acetyl-CoA + H2O = L-2-acetamido-6-oxoheptanedioate + CoA</text>
        <dbReference type="Rhea" id="RHEA:13085"/>
        <dbReference type="ChEBI" id="CHEBI:15377"/>
        <dbReference type="ChEBI" id="CHEBI:16845"/>
        <dbReference type="ChEBI" id="CHEBI:57287"/>
        <dbReference type="ChEBI" id="CHEBI:57288"/>
        <dbReference type="ChEBI" id="CHEBI:58117"/>
        <dbReference type="EC" id="2.3.1.89"/>
    </reaction>
</comment>
<comment type="pathway">
    <text evidence="1">Amino-acid biosynthesis; L-lysine biosynthesis via DAP pathway; LL-2,6-diaminopimelate from (S)-tetrahydrodipicolinate (acetylase route): step 1/3.</text>
</comment>
<comment type="similarity">
    <text evidence="1">Belongs to the transferase hexapeptide repeat family. DapH subfamily.</text>
</comment>